<feature type="initiator methionine" description="Removed" evidence="3">
    <location>
        <position position="1"/>
    </location>
</feature>
<feature type="chain" id="PRO_0000456474" description="Phosphatidylinositol 3,4,5-trisphosphate 3-phosphatase and dual-specificity protein phosphatase PTEN">
    <location>
        <begin position="2"/>
        <end position="403"/>
    </location>
</feature>
<feature type="domain" description="Phosphatase tensin-type" evidence="6">
    <location>
        <begin position="14"/>
        <end position="185"/>
    </location>
</feature>
<feature type="domain" description="C2 tensin-type" evidence="5">
    <location>
        <begin position="190"/>
        <end position="350"/>
    </location>
</feature>
<feature type="region of interest" description="Required for interaction with NOP53" evidence="3">
    <location>
        <begin position="338"/>
        <end position="348"/>
    </location>
</feature>
<feature type="region of interest" description="Disordered" evidence="7">
    <location>
        <begin position="352"/>
        <end position="403"/>
    </location>
</feature>
<feature type="short sequence motif" description="PDZ domain-binding" evidence="2">
    <location>
        <begin position="401"/>
        <end position="403"/>
    </location>
</feature>
<feature type="compositionally biased region" description="Low complexity" evidence="7">
    <location>
        <begin position="360"/>
        <end position="369"/>
    </location>
</feature>
<feature type="compositionally biased region" description="Acidic residues" evidence="7">
    <location>
        <begin position="383"/>
        <end position="393"/>
    </location>
</feature>
<feature type="active site" description="Phosphocysteine intermediate" evidence="6">
    <location>
        <position position="124"/>
    </location>
</feature>
<feature type="modified residue" description="N-acetylthreonine" evidence="3">
    <location>
        <position position="2"/>
    </location>
</feature>
<feature type="modified residue" description="Phosphoserine" evidence="2">
    <location>
        <position position="294"/>
    </location>
</feature>
<feature type="modified residue" description="Phosphothreonine" evidence="3">
    <location>
        <position position="319"/>
    </location>
</feature>
<feature type="modified residue" description="Phosphothreonine" evidence="3">
    <location>
        <position position="321"/>
    </location>
</feature>
<feature type="modified residue" description="Phosphotyrosine" evidence="3">
    <location>
        <position position="336"/>
    </location>
</feature>
<feature type="modified residue" description="Phosphothreonine" evidence="2">
    <location>
        <position position="366"/>
    </location>
</feature>
<feature type="modified residue" description="Phosphoserine" evidence="2">
    <location>
        <position position="370"/>
    </location>
</feature>
<feature type="modified residue" description="Phosphoserine" evidence="2">
    <location>
        <position position="380"/>
    </location>
</feature>
<feature type="modified residue" description="Phosphothreonine" evidence="2">
    <location>
        <position position="382"/>
    </location>
</feature>
<feature type="modified residue" description="Phosphothreonine" evidence="2">
    <location>
        <position position="383"/>
    </location>
</feature>
<feature type="modified residue" description="Phosphoserine" evidence="2">
    <location>
        <position position="385"/>
    </location>
</feature>
<feature type="modified residue" description="Phosphothreonine" evidence="3">
    <location>
        <position position="401"/>
    </location>
</feature>
<feature type="cross-link" description="Glycyl lysine isopeptide (Lys-Gly) (interchain with G-Cter in ubiquitin)" evidence="3">
    <location>
        <position position="13"/>
    </location>
</feature>
<feature type="cross-link" description="Glycyl lysine isopeptide (Lys-Gly) (interchain with G-Cter in ubiquitin)" evidence="3">
    <location>
        <position position="289"/>
    </location>
</feature>
<feature type="mutagenesis site" description="Dominant negative. Abolishes depression of AMPAR-mediated transmission. Abolishes NMDA receptor-dependent long-lasting depression." evidence="8">
    <original>C</original>
    <variation>S</variation>
    <location>
        <position position="124"/>
    </location>
</feature>
<feature type="mutagenesis site" description="Abolishes NMDA receptor-dependent long-lasting depression." evidence="8">
    <original>G</original>
    <variation>E</variation>
    <location>
        <position position="129"/>
    </location>
</feature>
<feature type="mutagenesis site" description="Loss of interaction with DLG4." evidence="8">
    <location>
        <begin position="400"/>
        <end position="403"/>
    </location>
</feature>
<feature type="strand" evidence="17">
    <location>
        <begin position="401"/>
        <end position="403"/>
    </location>
</feature>
<name>PTEN_RAT</name>
<accession>O54857</accession>
<comment type="function">
    <text evidence="2 3 9">Dual-specificity protein phosphatase, dephosphorylating tyrosine-, serine- and threonine-phosphorylated proteins. Also functions as a lipid phosphatase, removing the phosphate in the D3 position of the inositol ring of PtdIns(3,4,5)P3/phosphatidylinositol 3,4,5-trisphosphate, PtdIns(3,4)P2/phosphatidylinositol 3,4-diphosphate and PtdIns3P/phosphatidylinositol 3-phosphate with a preference for PtdIns(3,4,5)P3. Furthermore, this enzyme can also act as a cytosolic inositol 3-phosphatase acting on Ins(1,3,4,5,6)P5/inositol 1,3,4,5,6 pentakisphosphate and possibly Ins(1,3,4,5)P4/1D-myo-inositol 1,3,4,5-tetrakisphosphate. Antagonizes the PI3K-AKT/PKB signaling pathway by dephosphorylating phosphoinositides and thereby modulating cell cycle progression and cell survival. The unphosphorylated form cooperates with MAGI2 to suppress AKT1 activation. In motile cells, suppresses the formation of lateral pseudopods and thereby promotes cell polarization and directed movement (By similarity). Dephosphorylates tyrosine-phosphorylated focal adhesion kinase and inhibits cell migration and integrin-mediated cell spreading and focal adhesion formation. Required for growth factor-induced epithelial cell migration; growth factor stimulation induces PTEN phosphorylation which changes its binding preference from the p85 regulatory subunit of the PI3K kinase complex to DLC1 and results in translocation of the PTEN-DLC1 complex to the posterior of migrating cells to promote RHOA activation (By similarity). Meanwhile, TNS3 switches binding preference from DLC1 to p85 and the TNS3-p85 complex translocates to the leading edge of migrating cells to activate RAC1 activation (By similarity). Plays a role as a key modulator of the AKT-mTOR signaling pathway controlling the tempo of the process of newborn neurons integration during adult neurogenesis, including correct neuron positioning, dendritic development and synapse formation (By similarity). Involved in the regulation of synaptic function in excitatory hippocampal synapses. Recruited to the postsynaptic membrane upon NMDA receptor activation, is required for the modulation of synaptic activity during plasticity. Enhancement of lipid phosphatase activity is able to drive depression of AMPA receptor-mediated synaptic responses, activity required for NMDA receptor-dependent long-term depression (LTD) (Ref.7). May be a negative regulator of insulin signaling and glucose metabolism in adipose tissue. The nuclear monoubiquitinated form possesses greater apoptotic potential, whereas the cytoplasmic nonubiquitinated form induces less tumor suppressive ability (By similarity).</text>
</comment>
<comment type="catalytic activity">
    <reaction evidence="3">
        <text>a 1,2-diacyl-sn-glycero-3-phospho-(1D-myo-inositol-3,4,5-trisphosphate) + H2O = a 1,2-diacyl-sn-glycero-3-phospho-(1D-myo-inositol-4,5-bisphosphate) + phosphate</text>
        <dbReference type="Rhea" id="RHEA:25017"/>
        <dbReference type="ChEBI" id="CHEBI:15377"/>
        <dbReference type="ChEBI" id="CHEBI:43474"/>
        <dbReference type="ChEBI" id="CHEBI:57836"/>
        <dbReference type="ChEBI" id="CHEBI:58456"/>
        <dbReference type="EC" id="3.1.3.67"/>
    </reaction>
    <physiologicalReaction direction="left-to-right" evidence="3">
        <dbReference type="Rhea" id="RHEA:25018"/>
    </physiologicalReaction>
</comment>
<comment type="catalytic activity">
    <reaction evidence="3">
        <text>O-phospho-L-seryl-[protein] + H2O = L-seryl-[protein] + phosphate</text>
        <dbReference type="Rhea" id="RHEA:20629"/>
        <dbReference type="Rhea" id="RHEA-COMP:9863"/>
        <dbReference type="Rhea" id="RHEA-COMP:11604"/>
        <dbReference type="ChEBI" id="CHEBI:15377"/>
        <dbReference type="ChEBI" id="CHEBI:29999"/>
        <dbReference type="ChEBI" id="CHEBI:43474"/>
        <dbReference type="ChEBI" id="CHEBI:83421"/>
        <dbReference type="EC" id="3.1.3.16"/>
    </reaction>
    <physiologicalReaction direction="left-to-right" evidence="3">
        <dbReference type="Rhea" id="RHEA:20630"/>
    </physiologicalReaction>
</comment>
<comment type="catalytic activity">
    <reaction evidence="3">
        <text>O-phospho-L-threonyl-[protein] + H2O = L-threonyl-[protein] + phosphate</text>
        <dbReference type="Rhea" id="RHEA:47004"/>
        <dbReference type="Rhea" id="RHEA-COMP:11060"/>
        <dbReference type="Rhea" id="RHEA-COMP:11605"/>
        <dbReference type="ChEBI" id="CHEBI:15377"/>
        <dbReference type="ChEBI" id="CHEBI:30013"/>
        <dbReference type="ChEBI" id="CHEBI:43474"/>
        <dbReference type="ChEBI" id="CHEBI:61977"/>
        <dbReference type="EC" id="3.1.3.16"/>
    </reaction>
    <physiologicalReaction direction="left-to-right" evidence="3">
        <dbReference type="Rhea" id="RHEA:47005"/>
    </physiologicalReaction>
</comment>
<comment type="catalytic activity">
    <reaction evidence="3">
        <text>O-phospho-L-tyrosyl-[protein] + H2O = L-tyrosyl-[protein] + phosphate</text>
        <dbReference type="Rhea" id="RHEA:10684"/>
        <dbReference type="Rhea" id="RHEA-COMP:10136"/>
        <dbReference type="Rhea" id="RHEA-COMP:20101"/>
        <dbReference type="ChEBI" id="CHEBI:15377"/>
        <dbReference type="ChEBI" id="CHEBI:43474"/>
        <dbReference type="ChEBI" id="CHEBI:46858"/>
        <dbReference type="ChEBI" id="CHEBI:61978"/>
        <dbReference type="EC" id="3.1.3.48"/>
    </reaction>
    <physiologicalReaction direction="left-to-right" evidence="3">
        <dbReference type="Rhea" id="RHEA:10685"/>
    </physiologicalReaction>
</comment>
<comment type="catalytic activity">
    <reaction evidence="3">
        <text>1,2-dioctanoyl-sn-glycero-3-phospho-(1D-myo-inositol-3,4,5-trisphosphate) + H2O = 1,2-dioctanoyl-sn-glycero-3-phospho-(1D-myo-inositol-4,5-bisphosphate) + phosphate</text>
        <dbReference type="Rhea" id="RHEA:43552"/>
        <dbReference type="ChEBI" id="CHEBI:15377"/>
        <dbReference type="ChEBI" id="CHEBI:43474"/>
        <dbReference type="ChEBI" id="CHEBI:83416"/>
        <dbReference type="ChEBI" id="CHEBI:83419"/>
    </reaction>
    <physiologicalReaction direction="left-to-right" evidence="3">
        <dbReference type="Rhea" id="RHEA:43553"/>
    </physiologicalReaction>
</comment>
<comment type="catalytic activity">
    <reaction evidence="3">
        <text>1,2-dihexadecanoyl-sn-glycero-3-phospho-(1D-myo-inositol-3,4,5-trisphosphate) + H2O = 1,2-dihexadecanoyl-sn-glycero-3-phospho-(1D-myo-inositol-4,5-bisphosphate) + phosphate</text>
        <dbReference type="Rhea" id="RHEA:43560"/>
        <dbReference type="ChEBI" id="CHEBI:15377"/>
        <dbReference type="ChEBI" id="CHEBI:43474"/>
        <dbReference type="ChEBI" id="CHEBI:83420"/>
        <dbReference type="ChEBI" id="CHEBI:83423"/>
    </reaction>
    <physiologicalReaction direction="left-to-right" evidence="3">
        <dbReference type="Rhea" id="RHEA:43561"/>
    </physiologicalReaction>
</comment>
<comment type="catalytic activity">
    <reaction evidence="3">
        <text>1D-myo-inositol 1,3,4,5,6-pentakisphosphate + H2O = 1D-myo-inositol 1,4,5,6-tetrakisphosphate + phosphate</text>
        <dbReference type="Rhea" id="RHEA:77143"/>
        <dbReference type="ChEBI" id="CHEBI:15377"/>
        <dbReference type="ChEBI" id="CHEBI:43474"/>
        <dbReference type="ChEBI" id="CHEBI:57627"/>
        <dbReference type="ChEBI" id="CHEBI:57733"/>
    </reaction>
    <physiologicalReaction direction="left-to-right" evidence="3">
        <dbReference type="Rhea" id="RHEA:77144"/>
    </physiologicalReaction>
</comment>
<comment type="catalytic activity">
    <reaction evidence="3">
        <text>1D-myo-inositol 1,3,4,5-tetrakisphosphate + H2O = 1D-myo-inositol 1,4,5-trisphosphate + phosphate</text>
        <dbReference type="Rhea" id="RHEA:77155"/>
        <dbReference type="ChEBI" id="CHEBI:15377"/>
        <dbReference type="ChEBI" id="CHEBI:43474"/>
        <dbReference type="ChEBI" id="CHEBI:57895"/>
        <dbReference type="ChEBI" id="CHEBI:203600"/>
    </reaction>
    <physiologicalReaction direction="left-to-right" evidence="3">
        <dbReference type="Rhea" id="RHEA:77156"/>
    </physiologicalReaction>
</comment>
<comment type="cofactor">
    <cofactor evidence="2">
        <name>Mg(2+)</name>
        <dbReference type="ChEBI" id="CHEBI:18420"/>
    </cofactor>
</comment>
<comment type="subunit">
    <text evidence="2 3 8">Monomer. The unphosphorylated form interacts with the second PDZ domain of MAGI2 (By similarity). Interacts with MAGI2, MAGI3, MAST1 and MAST3, but neither with MAST4 nor with DLG5; interaction with MAGI2 increases protein stability (By similarity). Interacts with NEDD4 (By similarity). Interacts with NDFIP1 and NDFIP2; in the presence of NEDD4 or ITCH, this interaction promotes PTEN ubiquitination (By similarity). Interacts (via C2 domain) with FRK (By similarity). Interacts with USP7; the interaction is direct (By similarity). Interacts with ROCK1. Interacts with XIAP/BIRC4 (By similarity). Interacts with STK11; the interaction phosphorylates PTEN (By similarity). Interacts with PPP1R16B (By similarity). Interacts with NOP53; regulates PTEN phosphorylation and increases its stability (By similarity). Interacts (via PDZ domain-binding motif) with DLG4; the interaction is induced by NMDA and is required for PTEN location at postsynaptic density (PubMed:20628354). Interacts with the regulatory p85 subunit of the PI3K kinase complex and with Rho GTPase-activating protein DLC1; in resting cells, interacts (via C2 tensin-type domain) with p85 but, following growth factor stimulation, PTEN is phosphorylated which leads to weakened interaction with p85 and enhanced interaction (via C2 tensin-type domain) with DLC1 while p85 interaction with TNS3 increases (By similarity).</text>
</comment>
<comment type="interaction">
    <interactant intactId="EBI-8074312">
        <id>O54857</id>
    </interactant>
    <interactant intactId="EBI-918187">
        <id>Q07266</id>
        <label>Dbn1</label>
    </interactant>
    <organismsDiffer>false</organismsDiffer>
    <experiments>3</experiments>
</comment>
<comment type="interaction">
    <interactant intactId="EBI-8074312">
        <id>O54857</id>
    </interactant>
    <interactant intactId="EBI-375655">
        <id>P31016</id>
        <label>Dlg4</label>
    </interactant>
    <organismsDiffer>false</organismsDiffer>
    <experiments>5</experiments>
</comment>
<comment type="subcellular location">
    <subcellularLocation>
        <location evidence="2">Cytoplasm</location>
    </subcellularLocation>
    <subcellularLocation>
        <location evidence="2">Nucleus</location>
    </subcellularLocation>
    <subcellularLocation>
        <location evidence="3">Nucleus</location>
        <location evidence="3">PML body</location>
    </subcellularLocation>
    <subcellularLocation>
        <location evidence="2">Synapse</location>
        <location evidence="2">Synaptosome</location>
    </subcellularLocation>
    <subcellularLocation>
        <location evidence="8">Cell projection</location>
        <location evidence="8">Dendritic spine</location>
    </subcellularLocation>
    <subcellularLocation>
        <location evidence="8">Postsynaptic density</location>
    </subcellularLocation>
    <text evidence="2 3 8">Monoubiquitinated form is nuclear (By similarity). Nonubiquitinated form is cytoplasmic (By similarity). Colocalized with PML and USP7 in PML nuclear bodies (By similarity). XIAP/BIRC4 promotes its nuclear localization (By similarity). Associares with the postsynaptic density in response to NMDAR activation (PubMed:20628354).</text>
</comment>
<comment type="PTM">
    <text evidence="2 3">Constitutively phosphorylated by CK2 under normal conditions. Phosphorylation results in an inhibited activity towards PIP3. Phosphorylation can both inhibit or promote PDZ-binding. Phosphorylation at Tyr-336 by FRK/PTK5 protects this protein from ubiquitin-mediated degradation probably by inhibiting its binding to NEDD4 (By similarity). Phosphorylation by PLK3 promotes its stability and prevents its degradation by the proteasome. Phosphorylation by ROCK1 is essential for its stability and activity (By similarity). Phosphorylated on Thr-319 and Thr-321 in the C2-type tensin domain following EGF stimulation which changes its binding preference from the p85 regulatory subunit of the PI3K kinase complex to DLC1 (By similarity).</text>
</comment>
<comment type="PTM">
    <text evidence="1 2">Monoubiquitinated; monoubiquitination is increased in presence of retinoic acid. Deubiquitinated by USP7; leading to its nuclear exclusion. Monoubiquitination of one of either Lys-13 and Lys-289 amino acid is sufficient to modulate PTEN compartmentalization (By similarity). Ubiquitinated by XIAP/BIRC4 (By similarity).</text>
</comment>
<comment type="PTM">
    <text evidence="3">Ubiquitinated by the DCX(DCAF13) E3 ubiquitin ligase complex, leading to its degradation.</text>
</comment>
<comment type="PTM">
    <text evidence="3">ISGylated. ISGylation promotes PTEN degradation.</text>
</comment>
<comment type="similarity">
    <text evidence="10">Belongs to the PTEN phosphatase protein family.</text>
</comment>
<keyword id="KW-0002">3D-structure</keyword>
<keyword id="KW-0007">Acetylation</keyword>
<keyword id="KW-0053">Apoptosis</keyword>
<keyword id="KW-0966">Cell projection</keyword>
<keyword id="KW-0963">Cytoplasm</keyword>
<keyword id="KW-0378">Hydrolase</keyword>
<keyword id="KW-1017">Isopeptide bond</keyword>
<keyword id="KW-0443">Lipid metabolism</keyword>
<keyword id="KW-0524">Neurogenesis</keyword>
<keyword id="KW-0539">Nucleus</keyword>
<keyword id="KW-0597">Phosphoprotein</keyword>
<keyword id="KW-0904">Protein phosphatase</keyword>
<keyword id="KW-1185">Reference proteome</keyword>
<keyword id="KW-0770">Synapse</keyword>
<keyword id="KW-0771">Synaptosome</keyword>
<keyword id="KW-0832">Ubl conjugation</keyword>
<gene>
    <name evidence="14" type="primary">Pten</name>
    <name evidence="13" type="ORF">rCG_47874</name>
</gene>
<organism evidence="11">
    <name type="scientific">Rattus norvegicus</name>
    <name type="common">Rat</name>
    <dbReference type="NCBI Taxonomy" id="10116"/>
    <lineage>
        <taxon>Eukaryota</taxon>
        <taxon>Metazoa</taxon>
        <taxon>Chordata</taxon>
        <taxon>Craniata</taxon>
        <taxon>Vertebrata</taxon>
        <taxon>Euteleostomi</taxon>
        <taxon>Mammalia</taxon>
        <taxon>Eutheria</taxon>
        <taxon>Euarchontoglires</taxon>
        <taxon>Glires</taxon>
        <taxon>Rodentia</taxon>
        <taxon>Myomorpha</taxon>
        <taxon>Muroidea</taxon>
        <taxon>Muridae</taxon>
        <taxon>Murinae</taxon>
        <taxon>Rattus</taxon>
    </lineage>
</organism>
<reference evidence="11" key="1">
    <citation type="submission" date="1997-08" db="EMBL/GenBank/DDBJ databases">
        <authorList>
            <person name="Roz L."/>
            <person name="Finocchiaro G."/>
        </authorList>
    </citation>
    <scope>NUCLEOTIDE SEQUENCE [MRNA]</scope>
    <source>
        <strain evidence="11">Sprague-Dawley</strain>
        <tissue evidence="11">Brain</tissue>
    </source>
</reference>
<reference evidence="12" key="2">
    <citation type="journal article" date="2003" name="Genes Chromosomes Cancer">
        <title>Recurrent allelic imbalance at the rat Pten locus in DMBA-induced fibrosarcomas.</title>
        <authorList>
            <person name="Sjoling A."/>
            <person name="Samuelson E."/>
            <person name="Adamovic T."/>
            <person name="Behboudi A."/>
            <person name="Rohme D."/>
            <person name="Levan G."/>
        </authorList>
    </citation>
    <scope>NUCLEOTIDE SEQUENCE [MRNA]</scope>
    <source>
        <strain evidence="12">Brown Norway</strain>
    </source>
</reference>
<reference key="3">
    <citation type="journal article" date="2004" name="Nature">
        <title>Genome sequence of the Brown Norway rat yields insights into mammalian evolution.</title>
        <authorList>
            <person name="Gibbs R.A."/>
            <person name="Weinstock G.M."/>
            <person name="Metzker M.L."/>
            <person name="Muzny D.M."/>
            <person name="Sodergren E.J."/>
            <person name="Scherer S."/>
            <person name="Scott G."/>
            <person name="Steffen D."/>
            <person name="Worley K.C."/>
            <person name="Burch P.E."/>
            <person name="Okwuonu G."/>
            <person name="Hines S."/>
            <person name="Lewis L."/>
            <person name="Deramo C."/>
            <person name="Delgado O."/>
            <person name="Dugan-Rocha S."/>
            <person name="Miner G."/>
            <person name="Morgan M."/>
            <person name="Hawes A."/>
            <person name="Gill R."/>
            <person name="Holt R.A."/>
            <person name="Adams M.D."/>
            <person name="Amanatides P.G."/>
            <person name="Baden-Tillson H."/>
            <person name="Barnstead M."/>
            <person name="Chin S."/>
            <person name="Evans C.A."/>
            <person name="Ferriera S."/>
            <person name="Fosler C."/>
            <person name="Glodek A."/>
            <person name="Gu Z."/>
            <person name="Jennings D."/>
            <person name="Kraft C.L."/>
            <person name="Nguyen T."/>
            <person name="Pfannkoch C.M."/>
            <person name="Sitter C."/>
            <person name="Sutton G.G."/>
            <person name="Venter J.C."/>
            <person name="Woodage T."/>
            <person name="Smith D."/>
            <person name="Lee H.-M."/>
            <person name="Gustafson E."/>
            <person name="Cahill P."/>
            <person name="Kana A."/>
            <person name="Doucette-Stamm L."/>
            <person name="Weinstock K."/>
            <person name="Fechtel K."/>
            <person name="Weiss R.B."/>
            <person name="Dunn D.M."/>
            <person name="Green E.D."/>
            <person name="Blakesley R.W."/>
            <person name="Bouffard G.G."/>
            <person name="De Jong P.J."/>
            <person name="Osoegawa K."/>
            <person name="Zhu B."/>
            <person name="Marra M."/>
            <person name="Schein J."/>
            <person name="Bosdet I."/>
            <person name="Fjell C."/>
            <person name="Jones S."/>
            <person name="Krzywinski M."/>
            <person name="Mathewson C."/>
            <person name="Siddiqui A."/>
            <person name="Wye N."/>
            <person name="McPherson J."/>
            <person name="Zhao S."/>
            <person name="Fraser C.M."/>
            <person name="Shetty J."/>
            <person name="Shatsman S."/>
            <person name="Geer K."/>
            <person name="Chen Y."/>
            <person name="Abramzon S."/>
            <person name="Nierman W.C."/>
            <person name="Havlak P.H."/>
            <person name="Chen R."/>
            <person name="Durbin K.J."/>
            <person name="Egan A."/>
            <person name="Ren Y."/>
            <person name="Song X.-Z."/>
            <person name="Li B."/>
            <person name="Liu Y."/>
            <person name="Qin X."/>
            <person name="Cawley S."/>
            <person name="Cooney A.J."/>
            <person name="D'Souza L.M."/>
            <person name="Martin K."/>
            <person name="Wu J.Q."/>
            <person name="Gonzalez-Garay M.L."/>
            <person name="Jackson A.R."/>
            <person name="Kalafus K.J."/>
            <person name="McLeod M.P."/>
            <person name="Milosavljevic A."/>
            <person name="Virk D."/>
            <person name="Volkov A."/>
            <person name="Wheeler D.A."/>
            <person name="Zhang Z."/>
            <person name="Bailey J.A."/>
            <person name="Eichler E.E."/>
            <person name="Tuzun E."/>
            <person name="Birney E."/>
            <person name="Mongin E."/>
            <person name="Ureta-Vidal A."/>
            <person name="Woodwark C."/>
            <person name="Zdobnov E."/>
            <person name="Bork P."/>
            <person name="Suyama M."/>
            <person name="Torrents D."/>
            <person name="Alexandersson M."/>
            <person name="Trask B.J."/>
            <person name="Young J.M."/>
            <person name="Huang H."/>
            <person name="Wang H."/>
            <person name="Xing H."/>
            <person name="Daniels S."/>
            <person name="Gietzen D."/>
            <person name="Schmidt J."/>
            <person name="Stevens K."/>
            <person name="Vitt U."/>
            <person name="Wingrove J."/>
            <person name="Camara F."/>
            <person name="Mar Alba M."/>
            <person name="Abril J.F."/>
            <person name="Guigo R."/>
            <person name="Smit A."/>
            <person name="Dubchak I."/>
            <person name="Rubin E.M."/>
            <person name="Couronne O."/>
            <person name="Poliakov A."/>
            <person name="Huebner N."/>
            <person name="Ganten D."/>
            <person name="Goesele C."/>
            <person name="Hummel O."/>
            <person name="Kreitler T."/>
            <person name="Lee Y.-A."/>
            <person name="Monti J."/>
            <person name="Schulz H."/>
            <person name="Zimdahl H."/>
            <person name="Himmelbauer H."/>
            <person name="Lehrach H."/>
            <person name="Jacob H.J."/>
            <person name="Bromberg S."/>
            <person name="Gullings-Handley J."/>
            <person name="Jensen-Seaman M.I."/>
            <person name="Kwitek A.E."/>
            <person name="Lazar J."/>
            <person name="Pasko D."/>
            <person name="Tonellato P.J."/>
            <person name="Twigger S."/>
            <person name="Ponting C.P."/>
            <person name="Duarte J.M."/>
            <person name="Rice S."/>
            <person name="Goodstadt L."/>
            <person name="Beatson S.A."/>
            <person name="Emes R.D."/>
            <person name="Winter E.E."/>
            <person name="Webber C."/>
            <person name="Brandt P."/>
            <person name="Nyakatura G."/>
            <person name="Adetobi M."/>
            <person name="Chiaromonte F."/>
            <person name="Elnitski L."/>
            <person name="Eswara P."/>
            <person name="Hardison R.C."/>
            <person name="Hou M."/>
            <person name="Kolbe D."/>
            <person name="Makova K."/>
            <person name="Miller W."/>
            <person name="Nekrutenko A."/>
            <person name="Riemer C."/>
            <person name="Schwartz S."/>
            <person name="Taylor J."/>
            <person name="Yang S."/>
            <person name="Zhang Y."/>
            <person name="Lindpaintner K."/>
            <person name="Andrews T.D."/>
            <person name="Caccamo M."/>
            <person name="Clamp M."/>
            <person name="Clarke L."/>
            <person name="Curwen V."/>
            <person name="Durbin R.M."/>
            <person name="Eyras E."/>
            <person name="Searle S.M."/>
            <person name="Cooper G.M."/>
            <person name="Batzoglou S."/>
            <person name="Brudno M."/>
            <person name="Sidow A."/>
            <person name="Stone E.A."/>
            <person name="Payseur B.A."/>
            <person name="Bourque G."/>
            <person name="Lopez-Otin C."/>
            <person name="Puente X.S."/>
            <person name="Chakrabarti K."/>
            <person name="Chatterji S."/>
            <person name="Dewey C."/>
            <person name="Pachter L."/>
            <person name="Bray N."/>
            <person name="Yap V.B."/>
            <person name="Caspi A."/>
            <person name="Tesler G."/>
            <person name="Pevzner P.A."/>
            <person name="Haussler D."/>
            <person name="Roskin K.M."/>
            <person name="Baertsch R."/>
            <person name="Clawson H."/>
            <person name="Furey T.S."/>
            <person name="Hinrichs A.S."/>
            <person name="Karolchik D."/>
            <person name="Kent W.J."/>
            <person name="Rosenbloom K.R."/>
            <person name="Trumbower H."/>
            <person name="Weirauch M."/>
            <person name="Cooper D.N."/>
            <person name="Stenson P.D."/>
            <person name="Ma B."/>
            <person name="Brent M."/>
            <person name="Arumugam M."/>
            <person name="Shteynberg D."/>
            <person name="Copley R.R."/>
            <person name="Taylor M.S."/>
            <person name="Riethman H."/>
            <person name="Mudunuri U."/>
            <person name="Peterson J."/>
            <person name="Guyer M."/>
            <person name="Felsenfeld A."/>
            <person name="Old S."/>
            <person name="Mockrin S."/>
            <person name="Collins F.S."/>
        </authorList>
    </citation>
    <scope>NUCLEOTIDE SEQUENCE [LARGE SCALE GENOMIC DNA]</scope>
    <source>
        <strain>Brown Norway</strain>
    </source>
</reference>
<reference key="4">
    <citation type="submission" date="2005-07" db="EMBL/GenBank/DDBJ databases">
        <authorList>
            <person name="Mural R.J."/>
            <person name="Adams M.D."/>
            <person name="Myers E.W."/>
            <person name="Smith H.O."/>
            <person name="Venter J.C."/>
        </authorList>
    </citation>
    <scope>NUCLEOTIDE SEQUENCE [LARGE SCALE GENOMIC DNA]</scope>
</reference>
<reference key="5">
    <citation type="journal article" date="2010" name="EMBO J.">
        <title>PTEN is recruited to the postsynaptic terminal for NMDA receptor-dependent long-term depression.</title>
        <authorList>
            <person name="Jurado S."/>
            <person name="Benoist M."/>
            <person name="Lario A."/>
            <person name="Knafo S."/>
            <person name="Petrok C.N."/>
            <person name="Esteban J.A."/>
        </authorList>
    </citation>
    <scope>FUNCTION</scope>
    <scope>SUBCELLULAR LOCATION</scope>
    <scope>INTERACTION WITH DLG4</scope>
    <scope>MUTAGENESIS OF CYS-124; GLY-129 AND 400-ILE--VAL-403</scope>
</reference>
<reference evidence="16" key="6">
    <citation type="journal article" date="2012" name="Nat. Commun.">
        <title>Quantitative maps of protein phosphorylation sites across 14 different rat organs and tissues.</title>
        <authorList>
            <person name="Lundby A."/>
            <person name="Secher A."/>
            <person name="Lage K."/>
            <person name="Nordsborg N.B."/>
            <person name="Dmytriyev A."/>
            <person name="Lundby C."/>
            <person name="Olsen J.V."/>
        </authorList>
    </citation>
    <scope>IDENTIFICATION BY MASS SPECTROMETRY [LARGE SCALE ANALYSIS]</scope>
</reference>
<reference evidence="15" key="7">
    <citation type="submission" date="2008-03" db="PDB data bank">
        <title>Solution structure of Par-3 PDZ3 in complex with PTEN peptide.</title>
        <authorList>
            <person name="Feng W."/>
            <person name="Wu H."/>
            <person name="Chan L."/>
            <person name="Zhang M."/>
        </authorList>
    </citation>
    <scope>STRUCTURE BY NMR OF 393-403</scope>
</reference>
<proteinExistence type="evidence at protein level"/>
<evidence type="ECO:0000250" key="1"/>
<evidence type="ECO:0000250" key="2">
    <source>
        <dbReference type="UniProtKB" id="O08586"/>
    </source>
</evidence>
<evidence type="ECO:0000250" key="3">
    <source>
        <dbReference type="UniProtKB" id="P60484"/>
    </source>
</evidence>
<evidence type="ECO:0000255" key="4">
    <source>
        <dbReference type="PIRNR" id="PIRNR038025"/>
    </source>
</evidence>
<evidence type="ECO:0000255" key="5">
    <source>
        <dbReference type="PROSITE-ProRule" id="PRU00589"/>
    </source>
</evidence>
<evidence type="ECO:0000255" key="6">
    <source>
        <dbReference type="PROSITE-ProRule" id="PRU00590"/>
    </source>
</evidence>
<evidence type="ECO:0000256" key="7">
    <source>
        <dbReference type="SAM" id="MobiDB-lite"/>
    </source>
</evidence>
<evidence type="ECO:0000269" key="8">
    <source>
    </source>
</evidence>
<evidence type="ECO:0000269" key="9">
    <source ref="7"/>
</evidence>
<evidence type="ECO:0000305" key="10"/>
<evidence type="ECO:0000312" key="11">
    <source>
        <dbReference type="EMBL" id="AAB96620.1"/>
    </source>
</evidence>
<evidence type="ECO:0000312" key="12">
    <source>
        <dbReference type="EMBL" id="AAO31948.1"/>
    </source>
</evidence>
<evidence type="ECO:0000312" key="13">
    <source>
        <dbReference type="EMBL" id="EDM13141.1"/>
    </source>
</evidence>
<evidence type="ECO:0000312" key="14">
    <source>
        <dbReference type="RGD" id="61995"/>
    </source>
</evidence>
<evidence type="ECO:0007744" key="15">
    <source>
        <dbReference type="PDB" id="2K20"/>
    </source>
</evidence>
<evidence type="ECO:0007744" key="16">
    <source>
    </source>
</evidence>
<evidence type="ECO:0007829" key="17">
    <source>
        <dbReference type="PDB" id="2K20"/>
    </source>
</evidence>
<sequence length="403" mass="47118">MTAIIKEIVSRNKRRYQEDGFDLDLTYIYPNIIAMGFPAERLEGVYRNNIDDVVRFLDSKHKNHYKIYNLCAERHYDTAKFNCRVAQYPFEDHNPPQLELIKPFCEDLDQWLSEDDNHVAAIHCKAGKGRTGVMICAYLLHRGKFLKAQEALDFYGEVRTRDKKGVTIPSQRRYVYYYSYLLKNHLDYRPVALLFHKMMFETIPMFSGGTCNPQFVVCQLKVKIYSSNSGPTRREDKLMYFEFPQPLPVCGDIKVEFFHKQNKMLKKDKMFHFWVNTFFIPGPEETSEKVENGSLCDQEIDSICSIERADNDKEYLVLTLTKNDLDKANKDKANRYFSPNFKVKLYFTKTVEEPSNPEASSSTSVTPDVSDNEPDHYRYSDTTDSDPENEPFDEDQHSQITKV</sequence>
<protein>
    <recommendedName>
        <fullName evidence="3">Phosphatidylinositol 3,4,5-trisphosphate 3-phosphatase and dual-specificity protein phosphatase PTEN</fullName>
        <ecNumber evidence="3">3.1.3.16</ecNumber>
        <ecNumber evidence="3">3.1.3.48</ecNumber>
        <ecNumber evidence="3">3.1.3.67</ecNumber>
    </recommendedName>
    <alternativeName>
        <fullName evidence="3">Inositol polyphosphate 3-phosphatase</fullName>
        <ecNumber evidence="3">3.1.3.-</ecNumber>
    </alternativeName>
    <alternativeName>
        <fullName evidence="4">Phosphatase and tensin homolog</fullName>
    </alternativeName>
</protein>
<dbReference type="EC" id="3.1.3.16" evidence="3"/>
<dbReference type="EC" id="3.1.3.48" evidence="3"/>
<dbReference type="EC" id="3.1.3.67" evidence="3"/>
<dbReference type="EC" id="3.1.3.-" evidence="3"/>
<dbReference type="EMBL" id="AF017185">
    <property type="protein sequence ID" value="AAB96620.1"/>
    <property type="molecule type" value="mRNA"/>
</dbReference>
<dbReference type="EMBL" id="AF455569">
    <property type="protein sequence ID" value="AAO31948.1"/>
    <property type="molecule type" value="mRNA"/>
</dbReference>
<dbReference type="EMBL" id="CH473953">
    <property type="protein sequence ID" value="EDM13141.1"/>
    <property type="molecule type" value="Genomic_DNA"/>
</dbReference>
<dbReference type="RefSeq" id="NP_113794.1">
    <property type="nucleotide sequence ID" value="NM_031606.2"/>
</dbReference>
<dbReference type="PDB" id="2K20">
    <property type="method" value="NMR"/>
    <property type="chains" value="B=393-403"/>
</dbReference>
<dbReference type="PDBsum" id="2K20"/>
<dbReference type="SMR" id="O54857"/>
<dbReference type="FunCoup" id="O54857">
    <property type="interactions" value="4273"/>
</dbReference>
<dbReference type="IntAct" id="O54857">
    <property type="interactions" value="4"/>
</dbReference>
<dbReference type="MINT" id="O54857"/>
<dbReference type="STRING" id="10116.ENSRNOP00000028143"/>
<dbReference type="iPTMnet" id="O54857"/>
<dbReference type="PhosphoSitePlus" id="O54857"/>
<dbReference type="PaxDb" id="10116-ENSRNOP00000028143"/>
<dbReference type="Ensembl" id="ENSRNOT00000028143.4">
    <property type="protein sequence ID" value="ENSRNOP00000028143.1"/>
    <property type="gene ID" value="ENSRNOG00000020723.4"/>
</dbReference>
<dbReference type="GeneID" id="50557"/>
<dbReference type="KEGG" id="rno:50557"/>
<dbReference type="AGR" id="RGD:61995"/>
<dbReference type="CTD" id="5728"/>
<dbReference type="RGD" id="61995">
    <property type="gene designation" value="Pten"/>
</dbReference>
<dbReference type="eggNOG" id="KOG2283">
    <property type="taxonomic scope" value="Eukaryota"/>
</dbReference>
<dbReference type="GeneTree" id="ENSGT00940000163053"/>
<dbReference type="HOGENOM" id="CLU_020105_5_2_1"/>
<dbReference type="InParanoid" id="O54857"/>
<dbReference type="OrthoDB" id="13793at9989"/>
<dbReference type="TreeFam" id="TF324513"/>
<dbReference type="BRENDA" id="3.1.3.67">
    <property type="organism ID" value="5301"/>
</dbReference>
<dbReference type="EvolutionaryTrace" id="O54857"/>
<dbReference type="PRO" id="PR:O54857"/>
<dbReference type="Proteomes" id="UP000002494">
    <property type="component" value="Chromosome 1"/>
</dbReference>
<dbReference type="Proteomes" id="UP000234681">
    <property type="component" value="Chromosome 1"/>
</dbReference>
<dbReference type="Bgee" id="ENSRNOG00000020723">
    <property type="expression patterns" value="Expressed in duodenum and 19 other cell types or tissues"/>
</dbReference>
<dbReference type="GO" id="GO:0016324">
    <property type="term" value="C:apical plasma membrane"/>
    <property type="evidence" value="ECO:0000266"/>
    <property type="project" value="RGD"/>
</dbReference>
<dbReference type="GO" id="GO:0042995">
    <property type="term" value="C:cell projection"/>
    <property type="evidence" value="ECO:0000266"/>
    <property type="project" value="RGD"/>
</dbReference>
<dbReference type="GO" id="GO:0005737">
    <property type="term" value="C:cytoplasm"/>
    <property type="evidence" value="ECO:0000266"/>
    <property type="project" value="RGD"/>
</dbReference>
<dbReference type="GO" id="GO:0009898">
    <property type="term" value="C:cytoplasmic side of plasma membrane"/>
    <property type="evidence" value="ECO:0000266"/>
    <property type="project" value="RGD"/>
</dbReference>
<dbReference type="GO" id="GO:0005829">
    <property type="term" value="C:cytosol"/>
    <property type="evidence" value="ECO:0000318"/>
    <property type="project" value="GO_Central"/>
</dbReference>
<dbReference type="GO" id="GO:0043197">
    <property type="term" value="C:dendritic spine"/>
    <property type="evidence" value="ECO:0000314"/>
    <property type="project" value="RGD"/>
</dbReference>
<dbReference type="GO" id="GO:0035749">
    <property type="term" value="C:myelin sheath adaxonal region"/>
    <property type="evidence" value="ECO:0000266"/>
    <property type="project" value="RGD"/>
</dbReference>
<dbReference type="GO" id="GO:0043005">
    <property type="term" value="C:neuron projection"/>
    <property type="evidence" value="ECO:0000266"/>
    <property type="project" value="RGD"/>
</dbReference>
<dbReference type="GO" id="GO:0005634">
    <property type="term" value="C:nucleus"/>
    <property type="evidence" value="ECO:0000266"/>
    <property type="project" value="RGD"/>
</dbReference>
<dbReference type="GO" id="GO:0005886">
    <property type="term" value="C:plasma membrane"/>
    <property type="evidence" value="ECO:0000266"/>
    <property type="project" value="RGD"/>
</dbReference>
<dbReference type="GO" id="GO:0016605">
    <property type="term" value="C:PML body"/>
    <property type="evidence" value="ECO:0007669"/>
    <property type="project" value="UniProtKB-SubCell"/>
</dbReference>
<dbReference type="GO" id="GO:0099524">
    <property type="term" value="C:postsynaptic cytosol"/>
    <property type="evidence" value="ECO:0000314"/>
    <property type="project" value="SynGO"/>
</dbReference>
<dbReference type="GO" id="GO:0014069">
    <property type="term" value="C:postsynaptic density"/>
    <property type="evidence" value="ECO:0007669"/>
    <property type="project" value="UniProtKB-SubCell"/>
</dbReference>
<dbReference type="GO" id="GO:0045211">
    <property type="term" value="C:postsynaptic membrane"/>
    <property type="evidence" value="ECO:0000314"/>
    <property type="project" value="RGD"/>
</dbReference>
<dbReference type="GO" id="GO:0043220">
    <property type="term" value="C:Schmidt-Lanterman incisure"/>
    <property type="evidence" value="ECO:0000266"/>
    <property type="project" value="RGD"/>
</dbReference>
<dbReference type="GO" id="GO:0010997">
    <property type="term" value="F:anaphase-promoting complex binding"/>
    <property type="evidence" value="ECO:0000266"/>
    <property type="project" value="RGD"/>
</dbReference>
<dbReference type="GO" id="GO:0008013">
    <property type="term" value="F:beta-catenin binding"/>
    <property type="evidence" value="ECO:0000266"/>
    <property type="project" value="RGD"/>
</dbReference>
<dbReference type="GO" id="GO:0019899">
    <property type="term" value="F:enzyme binding"/>
    <property type="evidence" value="ECO:0000266"/>
    <property type="project" value="RGD"/>
</dbReference>
<dbReference type="GO" id="GO:0042802">
    <property type="term" value="F:identical protein binding"/>
    <property type="evidence" value="ECO:0000266"/>
    <property type="project" value="RGD"/>
</dbReference>
<dbReference type="GO" id="GO:0030351">
    <property type="term" value="F:inositol-1,3,4,5,6-pentakisphosphate 3-phosphatase activity"/>
    <property type="evidence" value="ECO:0000250"/>
    <property type="project" value="UniProtKB"/>
</dbReference>
<dbReference type="GO" id="GO:0051717">
    <property type="term" value="F:inositol-1,3,4,5-tetrakisphosphate 3-phosphatase activity"/>
    <property type="evidence" value="ECO:0000266"/>
    <property type="project" value="RGD"/>
</dbReference>
<dbReference type="GO" id="GO:0035255">
    <property type="term" value="F:ionotropic glutamate receptor binding"/>
    <property type="evidence" value="ECO:0000314"/>
    <property type="project" value="RGD"/>
</dbReference>
<dbReference type="GO" id="GO:0030165">
    <property type="term" value="F:PDZ domain binding"/>
    <property type="evidence" value="ECO:0000353"/>
    <property type="project" value="RGD"/>
</dbReference>
<dbReference type="GO" id="GO:0052866">
    <property type="term" value="F:phosphatidylinositol phosphate phosphatase activity"/>
    <property type="evidence" value="ECO:0000266"/>
    <property type="project" value="RGD"/>
</dbReference>
<dbReference type="GO" id="GO:0016314">
    <property type="term" value="F:phosphatidylinositol-3,4,5-trisphosphate 3-phosphatase activity"/>
    <property type="evidence" value="ECO:0000314"/>
    <property type="project" value="RGD"/>
</dbReference>
<dbReference type="GO" id="GO:0051800">
    <property type="term" value="F:phosphatidylinositol-3,4-bisphosphate 3-phosphatase activity"/>
    <property type="evidence" value="ECO:0000266"/>
    <property type="project" value="RGD"/>
</dbReference>
<dbReference type="GO" id="GO:0004438">
    <property type="term" value="F:phosphatidylinositol-3-phosphate phosphatase activity"/>
    <property type="evidence" value="ECO:0000266"/>
    <property type="project" value="RGD"/>
</dbReference>
<dbReference type="GO" id="GO:0004721">
    <property type="term" value="F:phosphoprotein phosphatase activity"/>
    <property type="evidence" value="ECO:0000266"/>
    <property type="project" value="RGD"/>
</dbReference>
<dbReference type="GO" id="GO:0005161">
    <property type="term" value="F:platelet-derived growth factor receptor binding"/>
    <property type="evidence" value="ECO:0000314"/>
    <property type="project" value="RGD"/>
</dbReference>
<dbReference type="GO" id="GO:0019901">
    <property type="term" value="F:protein kinase binding"/>
    <property type="evidence" value="ECO:0000266"/>
    <property type="project" value="RGD"/>
</dbReference>
<dbReference type="GO" id="GO:0004722">
    <property type="term" value="F:protein serine/threonine phosphatase activity"/>
    <property type="evidence" value="ECO:0000266"/>
    <property type="project" value="RGD"/>
</dbReference>
<dbReference type="GO" id="GO:1990782">
    <property type="term" value="F:protein tyrosine kinase binding"/>
    <property type="evidence" value="ECO:0000314"/>
    <property type="project" value="RGD"/>
</dbReference>
<dbReference type="GO" id="GO:0004725">
    <property type="term" value="F:protein tyrosine phosphatase activity"/>
    <property type="evidence" value="ECO:0000266"/>
    <property type="project" value="RGD"/>
</dbReference>
<dbReference type="GO" id="GO:0008138">
    <property type="term" value="F:protein tyrosine/serine/threonine phosphatase activity"/>
    <property type="evidence" value="ECO:0000304"/>
    <property type="project" value="RGD"/>
</dbReference>
<dbReference type="GO" id="GO:1990757">
    <property type="term" value="F:ubiquitin ligase activator activity"/>
    <property type="evidence" value="ECO:0000266"/>
    <property type="project" value="RGD"/>
</dbReference>
<dbReference type="GO" id="GO:1990381">
    <property type="term" value="F:ubiquitin-specific protease binding"/>
    <property type="evidence" value="ECO:0000266"/>
    <property type="project" value="RGD"/>
</dbReference>
<dbReference type="GO" id="GO:0030534">
    <property type="term" value="P:adult behavior"/>
    <property type="evidence" value="ECO:0000266"/>
    <property type="project" value="RGD"/>
</dbReference>
<dbReference type="GO" id="GO:0001525">
    <property type="term" value="P:angiogenesis"/>
    <property type="evidence" value="ECO:0000266"/>
    <property type="project" value="RGD"/>
</dbReference>
<dbReference type="GO" id="GO:0006915">
    <property type="term" value="P:apoptotic process"/>
    <property type="evidence" value="ECO:0000266"/>
    <property type="project" value="RGD"/>
</dbReference>
<dbReference type="GO" id="GO:0042100">
    <property type="term" value="P:B cell proliferation"/>
    <property type="evidence" value="ECO:0000266"/>
    <property type="project" value="RGD"/>
</dbReference>
<dbReference type="GO" id="GO:0048854">
    <property type="term" value="P:brain morphogenesis"/>
    <property type="evidence" value="ECO:0000266"/>
    <property type="project" value="RGD"/>
</dbReference>
<dbReference type="GO" id="GO:0048738">
    <property type="term" value="P:cardiac muscle tissue development"/>
    <property type="evidence" value="ECO:0000266"/>
    <property type="project" value="RGD"/>
</dbReference>
<dbReference type="GO" id="GO:0016477">
    <property type="term" value="P:cell migration"/>
    <property type="evidence" value="ECO:0000266"/>
    <property type="project" value="RGD"/>
</dbReference>
<dbReference type="GO" id="GO:0048870">
    <property type="term" value="P:cell motility"/>
    <property type="evidence" value="ECO:0000318"/>
    <property type="project" value="GO_Central"/>
</dbReference>
<dbReference type="GO" id="GO:0008283">
    <property type="term" value="P:cell population proliferation"/>
    <property type="evidence" value="ECO:0000266"/>
    <property type="project" value="RGD"/>
</dbReference>
<dbReference type="GO" id="GO:0036294">
    <property type="term" value="P:cellular response to decreased oxygen levels"/>
    <property type="evidence" value="ECO:0000266"/>
    <property type="project" value="RGD"/>
</dbReference>
<dbReference type="GO" id="GO:0071257">
    <property type="term" value="P:cellular response to electrical stimulus"/>
    <property type="evidence" value="ECO:0000266"/>
    <property type="project" value="RGD"/>
</dbReference>
<dbReference type="GO" id="GO:0071361">
    <property type="term" value="P:cellular response to ethanol"/>
    <property type="evidence" value="ECO:0000314"/>
    <property type="project" value="RGD"/>
</dbReference>
<dbReference type="GO" id="GO:0071456">
    <property type="term" value="P:cellular response to hypoxia"/>
    <property type="evidence" value="ECO:0000266"/>
    <property type="project" value="RGD"/>
</dbReference>
<dbReference type="GO" id="GO:0032869">
    <property type="term" value="P:cellular response to insulin stimulus"/>
    <property type="evidence" value="ECO:0000314"/>
    <property type="project" value="RGD"/>
</dbReference>
<dbReference type="GO" id="GO:1990314">
    <property type="term" value="P:cellular response to insulin-like growth factor stimulus"/>
    <property type="evidence" value="ECO:0000314"/>
    <property type="project" value="RGD"/>
</dbReference>
<dbReference type="GO" id="GO:0044320">
    <property type="term" value="P:cellular response to leptin stimulus"/>
    <property type="evidence" value="ECO:0000315"/>
    <property type="project" value="RGD"/>
</dbReference>
<dbReference type="GO" id="GO:1990090">
    <property type="term" value="P:cellular response to nerve growth factor stimulus"/>
    <property type="evidence" value="ECO:0000270"/>
    <property type="project" value="RGD"/>
</dbReference>
<dbReference type="GO" id="GO:0072709">
    <property type="term" value="P:cellular response to sorbitol"/>
    <property type="evidence" value="ECO:0000270"/>
    <property type="project" value="RGD"/>
</dbReference>
<dbReference type="GO" id="GO:0007417">
    <property type="term" value="P:central nervous system development"/>
    <property type="evidence" value="ECO:0000266"/>
    <property type="project" value="RGD"/>
</dbReference>
<dbReference type="GO" id="GO:0032286">
    <property type="term" value="P:central nervous system myelin maintenance"/>
    <property type="evidence" value="ECO:0000266"/>
    <property type="project" value="RGD"/>
</dbReference>
<dbReference type="GO" id="GO:0021955">
    <property type="term" value="P:central nervous system neuron axonogenesis"/>
    <property type="evidence" value="ECO:0000266"/>
    <property type="project" value="RGD"/>
</dbReference>
<dbReference type="GO" id="GO:0060997">
    <property type="term" value="P:dendritic spine morphogenesis"/>
    <property type="evidence" value="ECO:0000266"/>
    <property type="project" value="RGD"/>
</dbReference>
<dbReference type="GO" id="GO:0021542">
    <property type="term" value="P:dentate gyrus development"/>
    <property type="evidence" value="ECO:0000266"/>
    <property type="project" value="RGD"/>
</dbReference>
<dbReference type="GO" id="GO:0043542">
    <property type="term" value="P:endothelial cell migration"/>
    <property type="evidence" value="ECO:0000266"/>
    <property type="project" value="RGD"/>
</dbReference>
<dbReference type="GO" id="GO:0048853">
    <property type="term" value="P:forebrain morphogenesis"/>
    <property type="evidence" value="ECO:0000266"/>
    <property type="project" value="RGD"/>
</dbReference>
<dbReference type="GO" id="GO:0010467">
    <property type="term" value="P:gene expression"/>
    <property type="evidence" value="ECO:0000266"/>
    <property type="project" value="RGD"/>
</dbReference>
<dbReference type="GO" id="GO:0007507">
    <property type="term" value="P:heart development"/>
    <property type="evidence" value="ECO:0000266"/>
    <property type="project" value="RGD"/>
</dbReference>
<dbReference type="GO" id="GO:0071545">
    <property type="term" value="P:inositol phosphate catabolic process"/>
    <property type="evidence" value="ECO:0000314"/>
    <property type="project" value="RGD"/>
</dbReference>
<dbReference type="GO" id="GO:0007611">
    <property type="term" value="P:learning or memory"/>
    <property type="evidence" value="ECO:0000266"/>
    <property type="project" value="RGD"/>
</dbReference>
<dbReference type="GO" id="GO:0045475">
    <property type="term" value="P:locomotor rhythm"/>
    <property type="evidence" value="ECO:0000266"/>
    <property type="project" value="RGD"/>
</dbReference>
<dbReference type="GO" id="GO:0007626">
    <property type="term" value="P:locomotory behavior"/>
    <property type="evidence" value="ECO:0000266"/>
    <property type="project" value="RGD"/>
</dbReference>
<dbReference type="GO" id="GO:0060292">
    <property type="term" value="P:long-term synaptic depression"/>
    <property type="evidence" value="ECO:0000315"/>
    <property type="project" value="RGD"/>
</dbReference>
<dbReference type="GO" id="GO:0060291">
    <property type="term" value="P:long-term synaptic potentiation"/>
    <property type="evidence" value="ECO:0000266"/>
    <property type="project" value="RGD"/>
</dbReference>
<dbReference type="GO" id="GO:0060179">
    <property type="term" value="P:male mating behavior"/>
    <property type="evidence" value="ECO:0000266"/>
    <property type="project" value="RGD"/>
</dbReference>
<dbReference type="GO" id="GO:0042711">
    <property type="term" value="P:maternal behavior"/>
    <property type="evidence" value="ECO:0000266"/>
    <property type="project" value="RGD"/>
</dbReference>
<dbReference type="GO" id="GO:0007613">
    <property type="term" value="P:memory"/>
    <property type="evidence" value="ECO:0000315"/>
    <property type="project" value="RGD"/>
</dbReference>
<dbReference type="GO" id="GO:0033555">
    <property type="term" value="P:multicellular organismal response to stress"/>
    <property type="evidence" value="ECO:0000266"/>
    <property type="project" value="RGD"/>
</dbReference>
<dbReference type="GO" id="GO:0042552">
    <property type="term" value="P:myelination"/>
    <property type="evidence" value="ECO:0000266"/>
    <property type="project" value="RGD"/>
</dbReference>
<dbReference type="GO" id="GO:0060766">
    <property type="term" value="P:negative regulation of androgen receptor signaling pathway"/>
    <property type="evidence" value="ECO:0000266"/>
    <property type="project" value="RGD"/>
</dbReference>
<dbReference type="GO" id="GO:0043066">
    <property type="term" value="P:negative regulation of apoptotic process"/>
    <property type="evidence" value="ECO:0000315"/>
    <property type="project" value="RGD"/>
</dbReference>
<dbReference type="GO" id="GO:0048681">
    <property type="term" value="P:negative regulation of axon regeneration"/>
    <property type="evidence" value="ECO:0000266"/>
    <property type="project" value="RGD"/>
</dbReference>
<dbReference type="GO" id="GO:0050771">
    <property type="term" value="P:negative regulation of axonogenesis"/>
    <property type="evidence" value="ECO:0000266"/>
    <property type="project" value="RGD"/>
</dbReference>
<dbReference type="GO" id="GO:0030889">
    <property type="term" value="P:negative regulation of B cell proliferation"/>
    <property type="evidence" value="ECO:0000266"/>
    <property type="project" value="RGD"/>
</dbReference>
<dbReference type="GO" id="GO:0060044">
    <property type="term" value="P:negative regulation of cardiac muscle cell proliferation"/>
    <property type="evidence" value="ECO:0000315"/>
    <property type="project" value="RGD"/>
</dbReference>
<dbReference type="GO" id="GO:0045786">
    <property type="term" value="P:negative regulation of cell cycle"/>
    <property type="evidence" value="ECO:0000315"/>
    <property type="project" value="RGD"/>
</dbReference>
<dbReference type="GO" id="GO:1902807">
    <property type="term" value="P:negative regulation of cell cycle G1/S phase transition"/>
    <property type="evidence" value="ECO:0000266"/>
    <property type="project" value="RGD"/>
</dbReference>
<dbReference type="GO" id="GO:0030336">
    <property type="term" value="P:negative regulation of cell migration"/>
    <property type="evidence" value="ECO:0000266"/>
    <property type="project" value="RGD"/>
</dbReference>
<dbReference type="GO" id="GO:0008285">
    <property type="term" value="P:negative regulation of cell population proliferation"/>
    <property type="evidence" value="ECO:0000314"/>
    <property type="project" value="RGD"/>
</dbReference>
<dbReference type="GO" id="GO:0045792">
    <property type="term" value="P:negative regulation of cell size"/>
    <property type="evidence" value="ECO:0000266"/>
    <property type="project" value="RGD"/>
</dbReference>
<dbReference type="GO" id="GO:2000773">
    <property type="term" value="P:negative regulation of cellular senescence"/>
    <property type="evidence" value="ECO:0000266"/>
    <property type="project" value="RGD"/>
</dbReference>
<dbReference type="GO" id="GO:1900425">
    <property type="term" value="P:negative regulation of defense response to bacterium"/>
    <property type="evidence" value="ECO:0000315"/>
    <property type="project" value="RGD"/>
</dbReference>
<dbReference type="GO" id="GO:1903860">
    <property type="term" value="P:negative regulation of dendrite extension"/>
    <property type="evidence" value="ECO:0000315"/>
    <property type="project" value="RGD"/>
</dbReference>
<dbReference type="GO" id="GO:0061002">
    <property type="term" value="P:negative regulation of dendritic spine morphogenesis"/>
    <property type="evidence" value="ECO:0000266"/>
    <property type="project" value="RGD"/>
</dbReference>
<dbReference type="GO" id="GO:0050680">
    <property type="term" value="P:negative regulation of epithelial cell proliferation"/>
    <property type="evidence" value="ECO:0000266"/>
    <property type="project" value="RGD"/>
</dbReference>
<dbReference type="GO" id="GO:0010719">
    <property type="term" value="P:negative regulation of epithelial to mesenchymal transition"/>
    <property type="evidence" value="ECO:0000266"/>
    <property type="project" value="RGD"/>
</dbReference>
<dbReference type="GO" id="GO:0090394">
    <property type="term" value="P:negative regulation of excitatory postsynaptic potential"/>
    <property type="evidence" value="ECO:0000266"/>
    <property type="project" value="RGD"/>
</dbReference>
<dbReference type="GO" id="GO:0051895">
    <property type="term" value="P:negative regulation of focal adhesion assembly"/>
    <property type="evidence" value="ECO:0000266"/>
    <property type="project" value="RGD"/>
</dbReference>
<dbReference type="GO" id="GO:2000134">
    <property type="term" value="P:negative regulation of G1/S transition of mitotic cell cycle"/>
    <property type="evidence" value="ECO:0000266"/>
    <property type="project" value="RGD"/>
</dbReference>
<dbReference type="GO" id="GO:0051548">
    <property type="term" value="P:negative regulation of keratinocyte migration"/>
    <property type="evidence" value="ECO:0000266"/>
    <property type="project" value="RGD"/>
</dbReference>
<dbReference type="GO" id="GO:0031642">
    <property type="term" value="P:negative regulation of myelination"/>
    <property type="evidence" value="ECO:0000266"/>
    <property type="project" value="RGD"/>
</dbReference>
<dbReference type="GO" id="GO:0010977">
    <property type="term" value="P:negative regulation of neuron projection development"/>
    <property type="evidence" value="ECO:0000314"/>
    <property type="project" value="ARUK-UCL"/>
</dbReference>
<dbReference type="GO" id="GO:0046621">
    <property type="term" value="P:negative regulation of organ growth"/>
    <property type="evidence" value="ECO:0000266"/>
    <property type="project" value="RGD"/>
</dbReference>
<dbReference type="GO" id="GO:0045668">
    <property type="term" value="P:negative regulation of osteoblast differentiation"/>
    <property type="evidence" value="ECO:0000266"/>
    <property type="project" value="RGD"/>
</dbReference>
<dbReference type="GO" id="GO:0050765">
    <property type="term" value="P:negative regulation of phagocytosis"/>
    <property type="evidence" value="ECO:0000315"/>
    <property type="project" value="RGD"/>
</dbReference>
<dbReference type="GO" id="GO:0051898">
    <property type="term" value="P:negative regulation of phosphatidylinositol 3-kinase/protein kinase B signal transduction"/>
    <property type="evidence" value="ECO:0000266"/>
    <property type="project" value="RGD"/>
</dbReference>
<dbReference type="GO" id="GO:0090071">
    <property type="term" value="P:negative regulation of ribosome biogenesis"/>
    <property type="evidence" value="ECO:0000266"/>
    <property type="project" value="RGD"/>
</dbReference>
<dbReference type="GO" id="GO:2000808">
    <property type="term" value="P:negative regulation of synaptic vesicle clustering"/>
    <property type="evidence" value="ECO:0000266"/>
    <property type="project" value="RGD"/>
</dbReference>
<dbReference type="GO" id="GO:0042130">
    <property type="term" value="P:negative regulation of T cell proliferation"/>
    <property type="evidence" value="ECO:0000266"/>
    <property type="project" value="RGD"/>
</dbReference>
<dbReference type="GO" id="GO:1904262">
    <property type="term" value="P:negative regulation of TORC1 signaling"/>
    <property type="evidence" value="ECO:0000266"/>
    <property type="project" value="RGD"/>
</dbReference>
<dbReference type="GO" id="GO:1904706">
    <property type="term" value="P:negative regulation of vascular associated smooth muscle cell proliferation"/>
    <property type="evidence" value="ECO:0000266"/>
    <property type="project" value="RGD"/>
</dbReference>
<dbReference type="GO" id="GO:1903690">
    <property type="term" value="P:negative regulation of wound healing, spreading of epidermal cells"/>
    <property type="evidence" value="ECO:0000266"/>
    <property type="project" value="RGD"/>
</dbReference>
<dbReference type="GO" id="GO:0031175">
    <property type="term" value="P:neuron projection development"/>
    <property type="evidence" value="ECO:0000314"/>
    <property type="project" value="RGD"/>
</dbReference>
<dbReference type="GO" id="GO:0007270">
    <property type="term" value="P:neuron-neuron synaptic transmission"/>
    <property type="evidence" value="ECO:0000266"/>
    <property type="project" value="RGD"/>
</dbReference>
<dbReference type="GO" id="GO:0043491">
    <property type="term" value="P:phosphatidylinositol 3-kinase/protein kinase B signal transduction"/>
    <property type="evidence" value="ECO:0000266"/>
    <property type="project" value="RGD"/>
</dbReference>
<dbReference type="GO" id="GO:0046856">
    <property type="term" value="P:phosphatidylinositol dephosphorylation"/>
    <property type="evidence" value="ECO:0000314"/>
    <property type="project" value="RGD"/>
</dbReference>
<dbReference type="GO" id="GO:0048008">
    <property type="term" value="P:platelet-derived growth factor receptor signaling pathway"/>
    <property type="evidence" value="ECO:0000314"/>
    <property type="project" value="RGD"/>
</dbReference>
<dbReference type="GO" id="GO:0043065">
    <property type="term" value="P:positive regulation of apoptotic process"/>
    <property type="evidence" value="ECO:0000315"/>
    <property type="project" value="RGD"/>
</dbReference>
<dbReference type="GO" id="GO:2001235">
    <property type="term" value="P:positive regulation of apoptotic signaling pathway"/>
    <property type="evidence" value="ECO:0000266"/>
    <property type="project" value="RGD"/>
</dbReference>
<dbReference type="GO" id="GO:0010666">
    <property type="term" value="P:positive regulation of cardiac muscle cell apoptotic process"/>
    <property type="evidence" value="ECO:0000315"/>
    <property type="project" value="RGD"/>
</dbReference>
<dbReference type="GO" id="GO:0008284">
    <property type="term" value="P:positive regulation of cell population proliferation"/>
    <property type="evidence" value="ECO:0000266"/>
    <property type="project" value="RGD"/>
</dbReference>
<dbReference type="GO" id="GO:0070374">
    <property type="term" value="P:positive regulation of ERK1 and ERK2 cascade"/>
    <property type="evidence" value="ECO:0000266"/>
    <property type="project" value="RGD"/>
</dbReference>
<dbReference type="GO" id="GO:2000463">
    <property type="term" value="P:positive regulation of excitatory postsynaptic potential"/>
    <property type="evidence" value="ECO:0000266"/>
    <property type="project" value="RGD"/>
</dbReference>
<dbReference type="GO" id="GO:0010628">
    <property type="term" value="P:positive regulation of gene expression"/>
    <property type="evidence" value="ECO:0000315"/>
    <property type="project" value="RGD"/>
</dbReference>
<dbReference type="GO" id="GO:0032755">
    <property type="term" value="P:positive regulation of interleukin-6 production"/>
    <property type="evidence" value="ECO:0000315"/>
    <property type="project" value="RGD"/>
</dbReference>
<dbReference type="GO" id="GO:1902533">
    <property type="term" value="P:positive regulation of intracellular signal transduction"/>
    <property type="evidence" value="ECO:0000266"/>
    <property type="project" value="RGD"/>
</dbReference>
<dbReference type="GO" id="GO:0045666">
    <property type="term" value="P:positive regulation of neuron differentiation"/>
    <property type="evidence" value="ECO:0000315"/>
    <property type="project" value="RGD"/>
</dbReference>
<dbReference type="GO" id="GO:0045944">
    <property type="term" value="P:positive regulation of transcription by RNA polymerase II"/>
    <property type="evidence" value="ECO:0000266"/>
    <property type="project" value="RGD"/>
</dbReference>
<dbReference type="GO" id="GO:0032760">
    <property type="term" value="P:positive regulation of tumor necrosis factor production"/>
    <property type="evidence" value="ECO:0000315"/>
    <property type="project" value="RGD"/>
</dbReference>
<dbReference type="GO" id="GO:2000060">
    <property type="term" value="P:positive regulation of ubiquitin-dependent protein catabolic process"/>
    <property type="evidence" value="ECO:0000266"/>
    <property type="project" value="RGD"/>
</dbReference>
<dbReference type="GO" id="GO:0097107">
    <property type="term" value="P:postsynaptic density assembly"/>
    <property type="evidence" value="ECO:0000266"/>
    <property type="project" value="RGD"/>
</dbReference>
<dbReference type="GO" id="GO:0060134">
    <property type="term" value="P:prepulse inhibition"/>
    <property type="evidence" value="ECO:0000266"/>
    <property type="project" value="RGD"/>
</dbReference>
<dbReference type="GO" id="GO:0097105">
    <property type="term" value="P:presynaptic membrane assembly"/>
    <property type="evidence" value="ECO:0000266"/>
    <property type="project" value="RGD"/>
</dbReference>
<dbReference type="GO" id="GO:0060736">
    <property type="term" value="P:prostate gland growth"/>
    <property type="evidence" value="ECO:0000266"/>
    <property type="project" value="RGD"/>
</dbReference>
<dbReference type="GO" id="GO:0050821">
    <property type="term" value="P:protein stabilization"/>
    <property type="evidence" value="ECO:0000266"/>
    <property type="project" value="RGD"/>
</dbReference>
<dbReference type="GO" id="GO:0048679">
    <property type="term" value="P:regulation of axon regeneration"/>
    <property type="evidence" value="ECO:0000266"/>
    <property type="project" value="RGD"/>
</dbReference>
<dbReference type="GO" id="GO:0002902">
    <property type="term" value="P:regulation of B cell apoptotic process"/>
    <property type="evidence" value="ECO:0000266"/>
    <property type="project" value="RGD"/>
</dbReference>
<dbReference type="GO" id="GO:0051726">
    <property type="term" value="P:regulation of cell cycle"/>
    <property type="evidence" value="ECO:0000266"/>
    <property type="project" value="RGD"/>
</dbReference>
<dbReference type="GO" id="GO:0032535">
    <property type="term" value="P:regulation of cellular component size"/>
    <property type="evidence" value="ECO:0000266"/>
    <property type="project" value="RGD"/>
</dbReference>
<dbReference type="GO" id="GO:0060341">
    <property type="term" value="P:regulation of cellular localization"/>
    <property type="evidence" value="ECO:0000266"/>
    <property type="project" value="RGD"/>
</dbReference>
<dbReference type="GO" id="GO:0060368">
    <property type="term" value="P:regulation of Fc receptor mediated stimulatory signaling pathway"/>
    <property type="evidence" value="ECO:0000315"/>
    <property type="project" value="RGD"/>
</dbReference>
<dbReference type="GO" id="GO:2000109">
    <property type="term" value="P:regulation of macrophage apoptotic process"/>
    <property type="evidence" value="ECO:0000266"/>
    <property type="project" value="RGD"/>
</dbReference>
<dbReference type="GO" id="GO:0010975">
    <property type="term" value="P:regulation of neuron projection development"/>
    <property type="evidence" value="ECO:0000266"/>
    <property type="project" value="RGD"/>
</dbReference>
<dbReference type="GO" id="GO:0051896">
    <property type="term" value="P:regulation of phosphatidylinositol 3-kinase/protein kinase B signal transduction"/>
    <property type="evidence" value="ECO:0000318"/>
    <property type="project" value="GO_Central"/>
</dbReference>
<dbReference type="GO" id="GO:0031647">
    <property type="term" value="P:regulation of protein stability"/>
    <property type="evidence" value="ECO:0000266"/>
    <property type="project" value="RGD"/>
</dbReference>
<dbReference type="GO" id="GO:0032228">
    <property type="term" value="P:regulation of synaptic transmission, GABAergic"/>
    <property type="evidence" value="ECO:0000266"/>
    <property type="project" value="RGD"/>
</dbReference>
<dbReference type="GO" id="GO:0014823">
    <property type="term" value="P:response to activity"/>
    <property type="evidence" value="ECO:0000270"/>
    <property type="project" value="RGD"/>
</dbReference>
<dbReference type="GO" id="GO:0046685">
    <property type="term" value="P:response to arsenic-containing substance"/>
    <property type="evidence" value="ECO:0000270"/>
    <property type="project" value="RGD"/>
</dbReference>
<dbReference type="GO" id="GO:0033198">
    <property type="term" value="P:response to ATP"/>
    <property type="evidence" value="ECO:0000270"/>
    <property type="project" value="RGD"/>
</dbReference>
<dbReference type="GO" id="GO:0032355">
    <property type="term" value="P:response to estradiol"/>
    <property type="evidence" value="ECO:0000270"/>
    <property type="project" value="RGD"/>
</dbReference>
<dbReference type="GO" id="GO:0045471">
    <property type="term" value="P:response to ethanol"/>
    <property type="evidence" value="ECO:0000270"/>
    <property type="project" value="RGD"/>
</dbReference>
<dbReference type="GO" id="GO:0009749">
    <property type="term" value="P:response to glucose"/>
    <property type="evidence" value="ECO:0000270"/>
    <property type="project" value="RGD"/>
</dbReference>
<dbReference type="GO" id="GO:0007584">
    <property type="term" value="P:response to nutrient"/>
    <property type="evidence" value="ECO:0000270"/>
    <property type="project" value="RGD"/>
</dbReference>
<dbReference type="GO" id="GO:1905235">
    <property type="term" value="P:response to quercetin"/>
    <property type="evidence" value="ECO:0000270"/>
    <property type="project" value="RGD"/>
</dbReference>
<dbReference type="GO" id="GO:0009410">
    <property type="term" value="P:response to xenobiotic stimulus"/>
    <property type="evidence" value="ECO:0000270"/>
    <property type="project" value="RGD"/>
</dbReference>
<dbReference type="GO" id="GO:0010043">
    <property type="term" value="P:response to zinc ion"/>
    <property type="evidence" value="ECO:0000270"/>
    <property type="project" value="RGD"/>
</dbReference>
<dbReference type="GO" id="GO:0060024">
    <property type="term" value="P:rhythmic synaptic transmission"/>
    <property type="evidence" value="ECO:0000266"/>
    <property type="project" value="RGD"/>
</dbReference>
<dbReference type="GO" id="GO:0035176">
    <property type="term" value="P:social behavior"/>
    <property type="evidence" value="ECO:0000266"/>
    <property type="project" value="RGD"/>
</dbReference>
<dbReference type="GO" id="GO:0007056">
    <property type="term" value="P:spindle assembly involved in female meiosis"/>
    <property type="evidence" value="ECO:0000266"/>
    <property type="project" value="RGD"/>
</dbReference>
<dbReference type="GO" id="GO:0007416">
    <property type="term" value="P:synapse assembly"/>
    <property type="evidence" value="ECO:0000266"/>
    <property type="project" value="RGD"/>
</dbReference>
<dbReference type="GO" id="GO:0060074">
    <property type="term" value="P:synapse maturation"/>
    <property type="evidence" value="ECO:0000266"/>
    <property type="project" value="RGD"/>
</dbReference>
<dbReference type="GO" id="GO:0042098">
    <property type="term" value="P:T cell proliferation"/>
    <property type="evidence" value="ECO:0000266"/>
    <property type="project" value="RGD"/>
</dbReference>
<dbReference type="CDD" id="cd14509">
    <property type="entry name" value="PTP_PTEN"/>
    <property type="match status" value="1"/>
</dbReference>
<dbReference type="FunFam" id="2.60.40.1110:FF:000003">
    <property type="entry name" value="Phosphatidylinositol 3,4,5-trisphosphate 3-phosphatase and dual-specificity protein phosphatase PTEN"/>
    <property type="match status" value="1"/>
</dbReference>
<dbReference type="FunFam" id="3.90.190.10:FF:000029">
    <property type="entry name" value="Phosphatidylinositol 3,4,5-trisphosphate 3-phosphatase and dual-specificity protein phosphatase PTEN"/>
    <property type="match status" value="1"/>
</dbReference>
<dbReference type="Gene3D" id="2.60.40.1110">
    <property type="match status" value="1"/>
</dbReference>
<dbReference type="Gene3D" id="3.90.190.10">
    <property type="entry name" value="Protein tyrosine phosphatase superfamily"/>
    <property type="match status" value="1"/>
</dbReference>
<dbReference type="InterPro" id="IPR017361">
    <property type="entry name" value="Bifunc_PIno_P3_Pase/Pase_PTEN"/>
</dbReference>
<dbReference type="InterPro" id="IPR035892">
    <property type="entry name" value="C2_domain_sf"/>
</dbReference>
<dbReference type="InterPro" id="IPR051281">
    <property type="entry name" value="Dual-spec_lipid-protein_phosph"/>
</dbReference>
<dbReference type="InterPro" id="IPR029021">
    <property type="entry name" value="Prot-tyrosine_phosphatase-like"/>
</dbReference>
<dbReference type="InterPro" id="IPR045101">
    <property type="entry name" value="PTP_PTEN"/>
</dbReference>
<dbReference type="InterPro" id="IPR014020">
    <property type="entry name" value="Tensin_C2-dom"/>
</dbReference>
<dbReference type="InterPro" id="IPR029023">
    <property type="entry name" value="Tensin_phosphatase"/>
</dbReference>
<dbReference type="InterPro" id="IPR016130">
    <property type="entry name" value="Tyr_Pase_AS"/>
</dbReference>
<dbReference type="InterPro" id="IPR003595">
    <property type="entry name" value="Tyr_Pase_cat"/>
</dbReference>
<dbReference type="InterPro" id="IPR000387">
    <property type="entry name" value="Tyr_Pase_dom"/>
</dbReference>
<dbReference type="PANTHER" id="PTHR12305">
    <property type="entry name" value="PHOSPHATASE WITH HOMOLOGY TO TENSIN"/>
    <property type="match status" value="1"/>
</dbReference>
<dbReference type="PANTHER" id="PTHR12305:SF81">
    <property type="entry name" value="PHOSPHATIDYLINOSITOL 3,4,5-TRISPHOSPHATE 3-PHOSPHATASE AND DUAL-SPECIFICITY PROTEIN PHOSPHATASE PTEN"/>
    <property type="match status" value="1"/>
</dbReference>
<dbReference type="Pfam" id="PF10409">
    <property type="entry name" value="PTEN_C2"/>
    <property type="match status" value="1"/>
</dbReference>
<dbReference type="Pfam" id="PF22785">
    <property type="entry name" value="Tc-R-P"/>
    <property type="match status" value="1"/>
</dbReference>
<dbReference type="PIRSF" id="PIRSF038025">
    <property type="entry name" value="PTEN"/>
    <property type="match status" value="1"/>
</dbReference>
<dbReference type="SMART" id="SM01326">
    <property type="entry name" value="PTEN_C2"/>
    <property type="match status" value="1"/>
</dbReference>
<dbReference type="SMART" id="SM00404">
    <property type="entry name" value="PTPc_motif"/>
    <property type="match status" value="1"/>
</dbReference>
<dbReference type="SMART" id="SM01301">
    <property type="entry name" value="PTPlike_phytase"/>
    <property type="match status" value="1"/>
</dbReference>
<dbReference type="SUPFAM" id="SSF52799">
    <property type="entry name" value="(Phosphotyrosine protein) phosphatases II"/>
    <property type="match status" value="1"/>
</dbReference>
<dbReference type="SUPFAM" id="SSF49562">
    <property type="entry name" value="C2 domain (Calcium/lipid-binding domain, CaLB)"/>
    <property type="match status" value="1"/>
</dbReference>
<dbReference type="PROSITE" id="PS51182">
    <property type="entry name" value="C2_TENSIN"/>
    <property type="match status" value="1"/>
</dbReference>
<dbReference type="PROSITE" id="PS51181">
    <property type="entry name" value="PPASE_TENSIN"/>
    <property type="match status" value="1"/>
</dbReference>
<dbReference type="PROSITE" id="PS00383">
    <property type="entry name" value="TYR_PHOSPHATASE_1"/>
    <property type="match status" value="1"/>
</dbReference>
<dbReference type="PROSITE" id="PS50056">
    <property type="entry name" value="TYR_PHOSPHATASE_2"/>
    <property type="match status" value="1"/>
</dbReference>